<comment type="function">
    <text evidence="1 2">Neuroendocrine peptide which is a critical regulator of cellular and organ growth, development, migration, differentiation and survival and of epithelial calcium ion transport (By similarity). Acts by binding to its receptor, PTH1R, activating G protein-coupled receptor signaling (By similarity). Regulates endochondral bone development and epithelial-mesenchymal interactions during the formation of the mammary glands and teeth (By similarity). Required for skeletal homeostasis. Promotes mammary mesenchyme differentiation and bud outgrowth by modulating mesenchymal cell responsiveness to BMPs (By similarity). Up-regulates BMPR1A expression in the mammary mesenchyme and this increases the sensitivity of these cells to BMPs and allows them to respond to BMP4 in a paracrine and/or autocrine fashion. BMP4 signaling in the mesenchyme, in turn, triggers epithelial outgrowth and augments MSX2 expression, which causes the mammary mesenchyme to inhibit hair follicle formation within the nipple sheath (By similarity).</text>
</comment>
<comment type="function">
    <molecule>Osteostatin</molecule>
    <text evidence="1">Potent inhibitor of osteoclastic bone resorption.</text>
</comment>
<comment type="subunit">
    <text evidence="1">PTHrP interacts with PTH1R (via N-terminal extracellular domain).</text>
</comment>
<comment type="subcellular location">
    <subcellularLocation>
        <location evidence="1">Secreted</location>
    </subcellularLocation>
    <subcellularLocation>
        <location evidence="1">Cytoplasm</location>
    </subcellularLocation>
    <subcellularLocation>
        <location evidence="1">Nucleus</location>
    </subcellularLocation>
</comment>
<comment type="PTM">
    <text evidence="1">There are several secretory forms, including osteostatin, arising from endoproteolytic cleavage of the initial translation product. Each of these secretory forms is believed to have one or more of its own receptors that mediates the normal paracrine, autocrine and endocrine actions (By similarity).</text>
</comment>
<comment type="similarity">
    <text evidence="5">Belongs to the parathyroid hormone family.</text>
</comment>
<protein>
    <recommendedName>
        <fullName>Parathyroid hormone-related protein</fullName>
        <shortName>PTH-rP</shortName>
        <shortName>PTHrP</shortName>
    </recommendedName>
    <component>
        <recommendedName>
            <fullName>Osteostatin</fullName>
        </recommendedName>
    </component>
</protein>
<proteinExistence type="evidence at transcript level"/>
<organism>
    <name type="scientific">Bos taurus</name>
    <name type="common">Bovine</name>
    <dbReference type="NCBI Taxonomy" id="9913"/>
    <lineage>
        <taxon>Eukaryota</taxon>
        <taxon>Metazoa</taxon>
        <taxon>Chordata</taxon>
        <taxon>Craniata</taxon>
        <taxon>Vertebrata</taxon>
        <taxon>Euteleostomi</taxon>
        <taxon>Mammalia</taxon>
        <taxon>Eutheria</taxon>
        <taxon>Laurasiatheria</taxon>
        <taxon>Artiodactyla</taxon>
        <taxon>Ruminantia</taxon>
        <taxon>Pecora</taxon>
        <taxon>Bovidae</taxon>
        <taxon>Bovinae</taxon>
        <taxon>Bos</taxon>
    </lineage>
</organism>
<feature type="signal peptide" evidence="3">
    <location>
        <begin position="1"/>
        <end position="24"/>
    </location>
</feature>
<feature type="propeptide" id="PRO_0000023217" evidence="1">
    <location>
        <begin position="25"/>
        <end position="34"/>
    </location>
</feature>
<feature type="chain" id="PRO_0000023218" description="Parathyroid hormone-related protein">
    <location>
        <begin position="37"/>
        <end position="177"/>
    </location>
</feature>
<feature type="peptide" id="PRO_0000023219" description="Osteostatin" evidence="1">
    <location>
        <begin position="143"/>
        <end position="175"/>
    </location>
</feature>
<feature type="region of interest" description="Important for receptor binding" evidence="1">
    <location>
        <begin position="57"/>
        <end position="68"/>
    </location>
</feature>
<feature type="region of interest" description="Disordered" evidence="4">
    <location>
        <begin position="74"/>
        <end position="149"/>
    </location>
</feature>
<feature type="short sequence motif" description="Nuclear localization signal" evidence="1">
    <location>
        <begin position="108"/>
        <end position="129"/>
    </location>
</feature>
<feature type="compositionally biased region" description="Polar residues" evidence="4">
    <location>
        <begin position="76"/>
        <end position="90"/>
    </location>
</feature>
<feature type="compositionally biased region" description="Basic and acidic residues" evidence="4">
    <location>
        <begin position="109"/>
        <end position="118"/>
    </location>
</feature>
<feature type="compositionally biased region" description="Basic residues" evidence="4">
    <location>
        <begin position="122"/>
        <end position="132"/>
    </location>
</feature>
<feature type="sequence conflict" description="In Ref. 2; BAC44840." evidence="5" ref="2">
    <original>S</original>
    <variation>L</variation>
    <location>
        <position position="26"/>
    </location>
</feature>
<keyword id="KW-0106">Calcium</keyword>
<keyword id="KW-0165">Cleavage on pair of basic residues</keyword>
<keyword id="KW-0963">Cytoplasm</keyword>
<keyword id="KW-0372">Hormone</keyword>
<keyword id="KW-0539">Nucleus</keyword>
<keyword id="KW-1185">Reference proteome</keyword>
<keyword id="KW-0964">Secreted</keyword>
<keyword id="KW-0732">Signal</keyword>
<reference key="1">
    <citation type="journal article" date="1998" name="J. Mol. Endocrinol.">
        <title>Cloning of bovine parathyroid hormone-related protein (PTHrP) cDNA and expression of PTHrP mRNA in the bovine mammary gland.</title>
        <authorList>
            <person name="Wojcik S.F."/>
            <person name="Schanbacher F.L."/>
            <person name="McCauley L.K."/>
            <person name="Zhou H."/>
            <person name="Kartsogiannis V."/>
            <person name="Capen C.C."/>
            <person name="Rosol T.J."/>
        </authorList>
    </citation>
    <scope>NUCLEOTIDE SEQUENCE [MRNA]</scope>
    <source>
        <tissue>Brain</tissue>
    </source>
</reference>
<reference key="2">
    <citation type="submission" date="2002-12" db="EMBL/GenBank/DDBJ databases">
        <title>Molecular cloning of bovine parathyroid hormone-related protein cDNA.</title>
        <authorList>
            <person name="Onda K."/>
            <person name="Inaba M."/>
            <person name="Ono K."/>
        </authorList>
    </citation>
    <scope>NUCLEOTIDE SEQUENCE [MRNA]</scope>
    <source>
        <strain>Holstein-Friesian</strain>
        <tissue>Mammary gland</tissue>
    </source>
</reference>
<reference key="3">
    <citation type="submission" date="2007-07" db="EMBL/GenBank/DDBJ databases">
        <authorList>
            <consortium name="NIH - Mammalian Gene Collection (MGC) project"/>
        </authorList>
    </citation>
    <scope>NUCLEOTIDE SEQUENCE [LARGE SCALE MRNA]</scope>
    <source>
        <strain>Hereford</strain>
        <tissue>Fetal spinal cord</tissue>
    </source>
</reference>
<evidence type="ECO:0000250" key="1">
    <source>
        <dbReference type="UniProtKB" id="P12272"/>
    </source>
</evidence>
<evidence type="ECO:0000250" key="2">
    <source>
        <dbReference type="UniProtKB" id="P22858"/>
    </source>
</evidence>
<evidence type="ECO:0000255" key="3"/>
<evidence type="ECO:0000256" key="4">
    <source>
        <dbReference type="SAM" id="MobiDB-lite"/>
    </source>
</evidence>
<evidence type="ECO:0000305" key="5"/>
<sequence length="177" mass="20408">MLWRLVQQWSVAVFLLSYSVPSCGRSVEELGRRLKRAVSEHQLLHDKGKSIQDLRRRFFLHHLIAEIHTAEIRATSEVSPNSKPAPNTKNHPVRFGSDDEGKYLTQETNKVETYKEQPLKTPGKKKKSKPGKRKEQEKKKRRTRSAWLTSYVAGTGLEEDYLSDISATSLELNSRRH</sequence>
<name>PTHR_BOVIN</name>
<dbReference type="EMBL" id="AB097837">
    <property type="protein sequence ID" value="BAC44840.1"/>
    <property type="molecule type" value="mRNA"/>
</dbReference>
<dbReference type="EMBL" id="BC149411">
    <property type="protein sequence ID" value="AAI49412.1"/>
    <property type="molecule type" value="mRNA"/>
</dbReference>
<dbReference type="RefSeq" id="NP_777178.1">
    <property type="nucleotide sequence ID" value="NM_174753.1"/>
</dbReference>
<dbReference type="RefSeq" id="XP_005206971.1">
    <property type="nucleotide sequence ID" value="XM_005206914.5"/>
</dbReference>
<dbReference type="RefSeq" id="XP_059742115.1">
    <property type="nucleotide sequence ID" value="XM_059886132.1"/>
</dbReference>
<dbReference type="BMRB" id="P58073"/>
<dbReference type="SMR" id="P58073"/>
<dbReference type="FunCoup" id="P58073">
    <property type="interactions" value="15"/>
</dbReference>
<dbReference type="STRING" id="9913.ENSBTAP00000008581"/>
<dbReference type="PaxDb" id="9913-ENSBTAP00000040744"/>
<dbReference type="Ensembl" id="ENSBTAT00000043154.5">
    <property type="protein sequence ID" value="ENSBTAP00000040744.3"/>
    <property type="gene ID" value="ENSBTAG00000006538.7"/>
</dbReference>
<dbReference type="GeneID" id="286767"/>
<dbReference type="KEGG" id="bta:286767"/>
<dbReference type="CTD" id="5744"/>
<dbReference type="VEuPathDB" id="HostDB:ENSBTAG00000006538"/>
<dbReference type="VGNC" id="VGNC:33517">
    <property type="gene designation" value="PTHLH"/>
</dbReference>
<dbReference type="eggNOG" id="ENOG502S3J9">
    <property type="taxonomic scope" value="Eukaryota"/>
</dbReference>
<dbReference type="GeneTree" id="ENSGT00390000004933"/>
<dbReference type="HOGENOM" id="CLU_095189_0_0_1"/>
<dbReference type="InParanoid" id="P58073"/>
<dbReference type="OMA" id="TTHDHNL"/>
<dbReference type="OrthoDB" id="9892514at2759"/>
<dbReference type="TreeFam" id="TF332953"/>
<dbReference type="Reactome" id="R-BTA-373080">
    <property type="pathway name" value="Class B/2 (Secretin family receptors)"/>
</dbReference>
<dbReference type="Reactome" id="R-BTA-418555">
    <property type="pathway name" value="G alpha (s) signalling events"/>
</dbReference>
<dbReference type="Proteomes" id="UP000009136">
    <property type="component" value="Chromosome 5"/>
</dbReference>
<dbReference type="Bgee" id="ENSBTAG00000006538">
    <property type="expression patterns" value="Expressed in diaphragm and 85 other cell types or tissues"/>
</dbReference>
<dbReference type="GO" id="GO:0005737">
    <property type="term" value="C:cytoplasm"/>
    <property type="evidence" value="ECO:0007669"/>
    <property type="project" value="UniProtKB-SubCell"/>
</dbReference>
<dbReference type="GO" id="GO:0005576">
    <property type="term" value="C:extracellular region"/>
    <property type="evidence" value="ECO:0007669"/>
    <property type="project" value="UniProtKB-SubCell"/>
</dbReference>
<dbReference type="GO" id="GO:0005634">
    <property type="term" value="C:nucleus"/>
    <property type="evidence" value="ECO:0007669"/>
    <property type="project" value="UniProtKB-SubCell"/>
</dbReference>
<dbReference type="GO" id="GO:0005179">
    <property type="term" value="F:hormone activity"/>
    <property type="evidence" value="ECO:0000318"/>
    <property type="project" value="GO_Central"/>
</dbReference>
<dbReference type="GO" id="GO:0051428">
    <property type="term" value="F:peptide hormone receptor binding"/>
    <property type="evidence" value="ECO:0000250"/>
    <property type="project" value="UniProtKB"/>
</dbReference>
<dbReference type="GO" id="GO:0007189">
    <property type="term" value="P:adenylate cyclase-activating G protein-coupled receptor signaling pathway"/>
    <property type="evidence" value="ECO:0000318"/>
    <property type="project" value="GO_Central"/>
</dbReference>
<dbReference type="GO" id="GO:0030282">
    <property type="term" value="P:bone mineralization"/>
    <property type="evidence" value="ECO:0007669"/>
    <property type="project" value="InterPro"/>
</dbReference>
<dbReference type="GO" id="GO:0002076">
    <property type="term" value="P:osteoblast development"/>
    <property type="evidence" value="ECO:0000318"/>
    <property type="project" value="GO_Central"/>
</dbReference>
<dbReference type="GO" id="GO:0032330">
    <property type="term" value="P:regulation of chondrocyte differentiation"/>
    <property type="evidence" value="ECO:0000318"/>
    <property type="project" value="GO_Central"/>
</dbReference>
<dbReference type="InterPro" id="IPR003626">
    <property type="entry name" value="PTH-rel"/>
</dbReference>
<dbReference type="InterPro" id="IPR001415">
    <property type="entry name" value="PTH/PTH-rel"/>
</dbReference>
<dbReference type="PANTHER" id="PTHR17223">
    <property type="entry name" value="PARATHYROID HORMONE-RELATED"/>
    <property type="match status" value="1"/>
</dbReference>
<dbReference type="PANTHER" id="PTHR17223:SF0">
    <property type="entry name" value="PARATHYROID HORMONE-RELATED PROTEIN"/>
    <property type="match status" value="1"/>
</dbReference>
<dbReference type="Pfam" id="PF01279">
    <property type="entry name" value="Parathyroid"/>
    <property type="match status" value="1"/>
</dbReference>
<dbReference type="SMART" id="SM00087">
    <property type="entry name" value="PTH"/>
    <property type="match status" value="1"/>
</dbReference>
<dbReference type="PROSITE" id="PS00335">
    <property type="entry name" value="PARATHYROID"/>
    <property type="match status" value="1"/>
</dbReference>
<accession>P58073</accession>
<accession>A6QPN9</accession>
<accession>Q8HYS1</accession>
<gene>
    <name type="primary">PTHLH</name>
</gene>